<dbReference type="EMBL" id="AAHF01000007">
    <property type="protein sequence ID" value="EAL88451.2"/>
    <property type="molecule type" value="Genomic_DNA"/>
</dbReference>
<dbReference type="RefSeq" id="XP_750489.2">
    <property type="nucleotide sequence ID" value="XM_745396.2"/>
</dbReference>
<dbReference type="STRING" id="330879.Q4WJ31"/>
<dbReference type="EnsemblFungi" id="EAL88451">
    <property type="protein sequence ID" value="EAL88451"/>
    <property type="gene ID" value="AFUA_1G07430"/>
</dbReference>
<dbReference type="GeneID" id="3507748"/>
<dbReference type="KEGG" id="afm:AFUA_1G07430"/>
<dbReference type="VEuPathDB" id="FungiDB:Afu1g07430"/>
<dbReference type="eggNOG" id="ENOG502SCUM">
    <property type="taxonomic scope" value="Eukaryota"/>
</dbReference>
<dbReference type="HOGENOM" id="CLU_130004_1_1_1"/>
<dbReference type="InParanoid" id="Q4WJ31"/>
<dbReference type="OMA" id="MEGVQDP"/>
<dbReference type="OrthoDB" id="4174291at2759"/>
<dbReference type="Proteomes" id="UP000002530">
    <property type="component" value="Chromosome 1"/>
</dbReference>
<dbReference type="GO" id="GO:0005634">
    <property type="term" value="C:nucleus"/>
    <property type="evidence" value="ECO:0007669"/>
    <property type="project" value="UniProtKB-SubCell"/>
</dbReference>
<dbReference type="InterPro" id="IPR019098">
    <property type="entry name" value="Histone_chaperone_domain_CHZ"/>
</dbReference>
<dbReference type="Pfam" id="PF09649">
    <property type="entry name" value="CHZ"/>
    <property type="match status" value="1"/>
</dbReference>
<dbReference type="SMART" id="SM01082">
    <property type="entry name" value="CHZ"/>
    <property type="match status" value="1"/>
</dbReference>
<keyword id="KW-0143">Chaperone</keyword>
<keyword id="KW-0539">Nucleus</keyword>
<keyword id="KW-1185">Reference proteome</keyword>
<comment type="function">
    <text evidence="1">Forms a chaperone-bound H2A.Z-H2B complex that acts as a source for SWR1 complex-dependent H2A to H2A.Z histone replacement in chromatin.</text>
</comment>
<comment type="subunit">
    <text evidence="1">Forms a heterotrimer with H2A.Z-H2B, stabilizing the association of the histone dimer. Also, with a lower affinity, forms a heterotrimer with H2A-H2B (By similarity).</text>
</comment>
<comment type="subcellular location">
    <subcellularLocation>
        <location evidence="1">Nucleus</location>
    </subcellularLocation>
</comment>
<comment type="similarity">
    <text evidence="3">Belongs to the CHZ1 family.</text>
</comment>
<evidence type="ECO:0000250" key="1"/>
<evidence type="ECO:0000256" key="2">
    <source>
        <dbReference type="SAM" id="MobiDB-lite"/>
    </source>
</evidence>
<evidence type="ECO:0000305" key="3"/>
<name>CHZ1_ASPFU</name>
<gene>
    <name type="primary">chz1</name>
    <name type="ORF">AFUA_1G07430</name>
</gene>
<protein>
    <recommendedName>
        <fullName>Histone H2A.Z-specific chaperone chz1</fullName>
    </recommendedName>
</protein>
<accession>Q4WJ31</accession>
<feature type="chain" id="PRO_0000330200" description="Histone H2A.Z-specific chaperone chz1">
    <location>
        <begin position="1"/>
        <end position="121"/>
    </location>
</feature>
<feature type="region of interest" description="Disordered" evidence="2">
    <location>
        <begin position="1"/>
        <end position="121"/>
    </location>
</feature>
<feature type="compositionally biased region" description="Polar residues" evidence="2">
    <location>
        <begin position="1"/>
        <end position="10"/>
    </location>
</feature>
<feature type="compositionally biased region" description="Low complexity" evidence="2">
    <location>
        <begin position="11"/>
        <end position="21"/>
    </location>
</feature>
<feature type="compositionally biased region" description="Basic and acidic residues" evidence="2">
    <location>
        <begin position="22"/>
        <end position="32"/>
    </location>
</feature>
<feature type="compositionally biased region" description="Acidic residues" evidence="2">
    <location>
        <begin position="39"/>
        <end position="65"/>
    </location>
</feature>
<feature type="compositionally biased region" description="Basic and acidic residues" evidence="2">
    <location>
        <begin position="85"/>
        <end position="99"/>
    </location>
</feature>
<feature type="compositionally biased region" description="Acidic residues" evidence="2">
    <location>
        <begin position="100"/>
        <end position="121"/>
    </location>
</feature>
<proteinExistence type="inferred from homology"/>
<organism>
    <name type="scientific">Aspergillus fumigatus (strain ATCC MYA-4609 / CBS 101355 / FGSC A1100 / Af293)</name>
    <name type="common">Neosartorya fumigata</name>
    <dbReference type="NCBI Taxonomy" id="330879"/>
    <lineage>
        <taxon>Eukaryota</taxon>
        <taxon>Fungi</taxon>
        <taxon>Dikarya</taxon>
        <taxon>Ascomycota</taxon>
        <taxon>Pezizomycotina</taxon>
        <taxon>Eurotiomycetes</taxon>
        <taxon>Eurotiomycetidae</taxon>
        <taxon>Eurotiales</taxon>
        <taxon>Aspergillaceae</taxon>
        <taxon>Aspergillus</taxon>
        <taxon>Aspergillus subgen. Fumigati</taxon>
    </lineage>
</organism>
<sequence length="121" mass="13312">MGDNHQATLSNDPAANAPDAAAADKGKGKAADEPSLEMSMDEEEDSDESEAEEMMADDDDDDDHDNLEPISEANIISGGRRTRGKTIDFQEAAEKLKAEDEMDDEDDDDEEFQPNDEDMRD</sequence>
<reference key="1">
    <citation type="journal article" date="2005" name="Nature">
        <title>Genomic sequence of the pathogenic and allergenic filamentous fungus Aspergillus fumigatus.</title>
        <authorList>
            <person name="Nierman W.C."/>
            <person name="Pain A."/>
            <person name="Anderson M.J."/>
            <person name="Wortman J.R."/>
            <person name="Kim H.S."/>
            <person name="Arroyo J."/>
            <person name="Berriman M."/>
            <person name="Abe K."/>
            <person name="Archer D.B."/>
            <person name="Bermejo C."/>
            <person name="Bennett J.W."/>
            <person name="Bowyer P."/>
            <person name="Chen D."/>
            <person name="Collins M."/>
            <person name="Coulsen R."/>
            <person name="Davies R."/>
            <person name="Dyer P.S."/>
            <person name="Farman M.L."/>
            <person name="Fedorova N."/>
            <person name="Fedorova N.D."/>
            <person name="Feldblyum T.V."/>
            <person name="Fischer R."/>
            <person name="Fosker N."/>
            <person name="Fraser A."/>
            <person name="Garcia J.L."/>
            <person name="Garcia M.J."/>
            <person name="Goble A."/>
            <person name="Goldman G.H."/>
            <person name="Gomi K."/>
            <person name="Griffith-Jones S."/>
            <person name="Gwilliam R."/>
            <person name="Haas B.J."/>
            <person name="Haas H."/>
            <person name="Harris D.E."/>
            <person name="Horiuchi H."/>
            <person name="Huang J."/>
            <person name="Humphray S."/>
            <person name="Jimenez J."/>
            <person name="Keller N."/>
            <person name="Khouri H."/>
            <person name="Kitamoto K."/>
            <person name="Kobayashi T."/>
            <person name="Konzack S."/>
            <person name="Kulkarni R."/>
            <person name="Kumagai T."/>
            <person name="Lafton A."/>
            <person name="Latge J.-P."/>
            <person name="Li W."/>
            <person name="Lord A."/>
            <person name="Lu C."/>
            <person name="Majoros W.H."/>
            <person name="May G.S."/>
            <person name="Miller B.L."/>
            <person name="Mohamoud Y."/>
            <person name="Molina M."/>
            <person name="Monod M."/>
            <person name="Mouyna I."/>
            <person name="Mulligan S."/>
            <person name="Murphy L.D."/>
            <person name="O'Neil S."/>
            <person name="Paulsen I."/>
            <person name="Penalva M.A."/>
            <person name="Pertea M."/>
            <person name="Price C."/>
            <person name="Pritchard B.L."/>
            <person name="Quail M.A."/>
            <person name="Rabbinowitsch E."/>
            <person name="Rawlins N."/>
            <person name="Rajandream M.A."/>
            <person name="Reichard U."/>
            <person name="Renauld H."/>
            <person name="Robson G.D."/>
            <person name="Rodriguez de Cordoba S."/>
            <person name="Rodriguez-Pena J.M."/>
            <person name="Ronning C.M."/>
            <person name="Rutter S."/>
            <person name="Salzberg S.L."/>
            <person name="Sanchez M."/>
            <person name="Sanchez-Ferrero J.C."/>
            <person name="Saunders D."/>
            <person name="Seeger K."/>
            <person name="Squares R."/>
            <person name="Squares S."/>
            <person name="Takeuchi M."/>
            <person name="Tekaia F."/>
            <person name="Turner G."/>
            <person name="Vazquez de Aldana C.R."/>
            <person name="Weidman J."/>
            <person name="White O."/>
            <person name="Woodward J.R."/>
            <person name="Yu J.-H."/>
            <person name="Fraser C.M."/>
            <person name="Galagan J.E."/>
            <person name="Asai K."/>
            <person name="Machida M."/>
            <person name="Hall N."/>
            <person name="Barrell B.G."/>
            <person name="Denning D.W."/>
        </authorList>
    </citation>
    <scope>NUCLEOTIDE SEQUENCE [LARGE SCALE GENOMIC DNA]</scope>
    <source>
        <strain>ATCC MYA-4609 / CBS 101355 / FGSC A1100 / Af293</strain>
    </source>
</reference>